<sequence length="546" mass="62312">MLLDTLLELAGGINNVTRILAPQGQVVLALKHPPHAPHLPDDVSLQSVLGEWQLSVQRTAEVSDQQLAAIGKAIAERQKRATLPYQTALDCPYRPQWHISPPQGLLNDPNGFIYHQEEYHLFYQWHPFACEHKDKYWVHLKSLDLVHWQWQSVALTPSDWFDSHGVFSGHAVSHQQDLWLFYTGNTRLGTERQRQTMQCAARMNANGEFEKLGPVIRCLPEGVTEHIRDPKVIYTQGKWQMLLGAQTLAHQGRLAVYHSDDLLHWHFDKLYGDELGDYGYMWECPDWFELQGEAFFVFGPQGIASANPHHTIEHQNRIFRATQNAQGEIALLQGWPLDEGFDFYAPQTAQTADGRRVLCGWMGLPDETQHPSCDQGWIHQLTALRELEWREGKIYQHPLRELDTLQSEPHTLLLSDTVTELKTKSFDLQVTLPWGCELRLMQNAQYCVTLTLDAENRLLRLDRSATQIRQGDTIRELKLDSPTVELRILADQSSLEIFINQGEHVMTSRIFTPLDATGISLHGASVDAKLYYMAPASAPFNLEVNV</sequence>
<dbReference type="EC" id="3.2.1.26"/>
<dbReference type="EMBL" id="CP000626">
    <property type="protein sequence ID" value="ABQ18842.1"/>
    <property type="molecule type" value="Genomic_DNA"/>
</dbReference>
<dbReference type="EMBL" id="CP001236">
    <property type="protein sequence ID" value="ACP11491.1"/>
    <property type="molecule type" value="Genomic_DNA"/>
</dbReference>
<dbReference type="RefSeq" id="WP_000923294.1">
    <property type="nucleotide sequence ID" value="NZ_JAACZH010000013.1"/>
</dbReference>
<dbReference type="SMR" id="A5EZZ8"/>
<dbReference type="CAZy" id="GH32">
    <property type="family name" value="Glycoside Hydrolase Family 32"/>
</dbReference>
<dbReference type="KEGG" id="vco:VC0395_0599"/>
<dbReference type="KEGG" id="vcr:VC395_A0657"/>
<dbReference type="PATRIC" id="fig|345073.21.peg.3393"/>
<dbReference type="eggNOG" id="COG1621">
    <property type="taxonomic scope" value="Bacteria"/>
</dbReference>
<dbReference type="HOGENOM" id="CLU_001528_7_1_6"/>
<dbReference type="OrthoDB" id="9801455at2"/>
<dbReference type="UniPathway" id="UPA00238"/>
<dbReference type="Proteomes" id="UP000000249">
    <property type="component" value="Chromosome 1"/>
</dbReference>
<dbReference type="GO" id="GO:0005737">
    <property type="term" value="C:cytoplasm"/>
    <property type="evidence" value="ECO:0007669"/>
    <property type="project" value="UniProtKB-SubCell"/>
</dbReference>
<dbReference type="GO" id="GO:0004564">
    <property type="term" value="F:beta-fructofuranosidase activity"/>
    <property type="evidence" value="ECO:0007669"/>
    <property type="project" value="UniProtKB-EC"/>
</dbReference>
<dbReference type="GO" id="GO:0005985">
    <property type="term" value="P:sucrose metabolic process"/>
    <property type="evidence" value="ECO:0007669"/>
    <property type="project" value="UniProtKB-UniPathway"/>
</dbReference>
<dbReference type="CDD" id="cd18623">
    <property type="entry name" value="GH32_ScrB-like"/>
    <property type="match status" value="1"/>
</dbReference>
<dbReference type="Gene3D" id="2.60.120.560">
    <property type="entry name" value="Exo-inulinase, domain 1"/>
    <property type="match status" value="1"/>
</dbReference>
<dbReference type="Gene3D" id="2.115.10.20">
    <property type="entry name" value="Glycosyl hydrolase domain, family 43"/>
    <property type="match status" value="1"/>
</dbReference>
<dbReference type="InterPro" id="IPR013320">
    <property type="entry name" value="ConA-like_dom_sf"/>
</dbReference>
<dbReference type="InterPro" id="IPR051214">
    <property type="entry name" value="GH32_Enzymes"/>
</dbReference>
<dbReference type="InterPro" id="IPR001362">
    <property type="entry name" value="Glyco_hydro_32"/>
</dbReference>
<dbReference type="InterPro" id="IPR018053">
    <property type="entry name" value="Glyco_hydro_32_AS"/>
</dbReference>
<dbReference type="InterPro" id="IPR013189">
    <property type="entry name" value="Glyco_hydro_32_C"/>
</dbReference>
<dbReference type="InterPro" id="IPR013148">
    <property type="entry name" value="Glyco_hydro_32_N"/>
</dbReference>
<dbReference type="InterPro" id="IPR023296">
    <property type="entry name" value="Glyco_hydro_beta-prop_sf"/>
</dbReference>
<dbReference type="InterPro" id="IPR006232">
    <property type="entry name" value="Suc6P_hydrolase"/>
</dbReference>
<dbReference type="NCBIfam" id="TIGR01322">
    <property type="entry name" value="scrB_fam"/>
    <property type="match status" value="1"/>
</dbReference>
<dbReference type="PANTHER" id="PTHR43101">
    <property type="entry name" value="BETA-FRUCTOSIDASE"/>
    <property type="match status" value="1"/>
</dbReference>
<dbReference type="PANTHER" id="PTHR43101:SF1">
    <property type="entry name" value="BETA-FRUCTOSIDASE"/>
    <property type="match status" value="1"/>
</dbReference>
<dbReference type="Pfam" id="PF08244">
    <property type="entry name" value="Glyco_hydro_32C"/>
    <property type="match status" value="1"/>
</dbReference>
<dbReference type="Pfam" id="PF00251">
    <property type="entry name" value="Glyco_hydro_32N"/>
    <property type="match status" value="1"/>
</dbReference>
<dbReference type="SMART" id="SM00640">
    <property type="entry name" value="Glyco_32"/>
    <property type="match status" value="1"/>
</dbReference>
<dbReference type="SUPFAM" id="SSF75005">
    <property type="entry name" value="Arabinanase/levansucrase/invertase"/>
    <property type="match status" value="1"/>
</dbReference>
<dbReference type="SUPFAM" id="SSF49899">
    <property type="entry name" value="Concanavalin A-like lectins/glucanases"/>
    <property type="match status" value="1"/>
</dbReference>
<dbReference type="PROSITE" id="PS00609">
    <property type="entry name" value="GLYCOSYL_HYDROL_F32"/>
    <property type="match status" value="1"/>
</dbReference>
<reference key="1">
    <citation type="submission" date="2007-03" db="EMBL/GenBank/DDBJ databases">
        <authorList>
            <person name="Heidelberg J."/>
        </authorList>
    </citation>
    <scope>NUCLEOTIDE SEQUENCE [LARGE SCALE GENOMIC DNA]</scope>
    <source>
        <strain>ATCC 39541 / Classical Ogawa 395 / O395</strain>
    </source>
</reference>
<reference key="2">
    <citation type="journal article" date="2008" name="PLoS ONE">
        <title>A recalibrated molecular clock and independent origins for the cholera pandemic clones.</title>
        <authorList>
            <person name="Feng L."/>
            <person name="Reeves P.R."/>
            <person name="Lan R."/>
            <person name="Ren Y."/>
            <person name="Gao C."/>
            <person name="Zhou Z."/>
            <person name="Ren Y."/>
            <person name="Cheng J."/>
            <person name="Wang W."/>
            <person name="Wang J."/>
            <person name="Qian W."/>
            <person name="Li D."/>
            <person name="Wang L."/>
        </authorList>
    </citation>
    <scope>NUCLEOTIDE SEQUENCE [LARGE SCALE GENOMIC DNA]</scope>
    <source>
        <strain>ATCC 39541 / Classical Ogawa 395 / O395</strain>
    </source>
</reference>
<protein>
    <recommendedName>
        <fullName>Probable sucrose-6-phosphate hydrolase</fullName>
        <shortName>Sucrase</shortName>
        <ecNumber>3.2.1.26</ecNumber>
    </recommendedName>
    <alternativeName>
        <fullName>Invertase</fullName>
    </alternativeName>
</protein>
<organism>
    <name type="scientific">Vibrio cholerae serotype O1 (strain ATCC 39541 / Classical Ogawa 395 / O395)</name>
    <dbReference type="NCBI Taxonomy" id="345073"/>
    <lineage>
        <taxon>Bacteria</taxon>
        <taxon>Pseudomonadati</taxon>
        <taxon>Pseudomonadota</taxon>
        <taxon>Gammaproteobacteria</taxon>
        <taxon>Vibrionales</taxon>
        <taxon>Vibrionaceae</taxon>
        <taxon>Vibrio</taxon>
    </lineage>
</organism>
<comment type="function">
    <text evidence="1">Enables the bacterium to metabolize sucrose as a sole carbon source.</text>
</comment>
<comment type="catalytic activity">
    <reaction evidence="2">
        <text>Hydrolysis of terminal non-reducing beta-D-fructofuranoside residues in beta-D-fructofuranosides.</text>
        <dbReference type="EC" id="3.2.1.26"/>
    </reaction>
</comment>
<comment type="pathway">
    <text>Glycan biosynthesis; sucrose metabolism.</text>
</comment>
<comment type="subcellular location">
    <subcellularLocation>
        <location evidence="1">Cytoplasm</location>
    </subcellularLocation>
</comment>
<comment type="similarity">
    <text evidence="3">Belongs to the glycosyl hydrolase 32 family.</text>
</comment>
<proteinExistence type="inferred from homology"/>
<name>SCRB_VIBC3</name>
<accession>A5EZZ8</accession>
<accession>C3M5S8</accession>
<evidence type="ECO:0000250" key="1"/>
<evidence type="ECO:0000255" key="2">
    <source>
        <dbReference type="PROSITE-ProRule" id="PRU10067"/>
    </source>
</evidence>
<evidence type="ECO:0000305" key="3"/>
<gene>
    <name type="primary">cscA</name>
    <name type="ordered locus">VC0395_0599</name>
    <name type="ordered locus">VC395_A0657</name>
</gene>
<keyword id="KW-0963">Cytoplasm</keyword>
<keyword id="KW-0326">Glycosidase</keyword>
<keyword id="KW-0378">Hydrolase</keyword>
<feature type="chain" id="PRO_0000341299" description="Probable sucrose-6-phosphate hydrolase">
    <location>
        <begin position="1"/>
        <end position="546"/>
    </location>
</feature>
<feature type="active site" evidence="2">
    <location>
        <position position="108"/>
    </location>
</feature>
<feature type="binding site" evidence="1">
    <location>
        <begin position="105"/>
        <end position="108"/>
    </location>
    <ligand>
        <name>substrate</name>
    </ligand>
</feature>
<feature type="binding site" evidence="1">
    <location>
        <position position="124"/>
    </location>
    <ligand>
        <name>substrate</name>
    </ligand>
</feature>
<feature type="binding site" evidence="1">
    <location>
        <begin position="167"/>
        <end position="168"/>
    </location>
    <ligand>
        <name>substrate</name>
    </ligand>
</feature>
<feature type="binding site" evidence="1">
    <location>
        <begin position="228"/>
        <end position="229"/>
    </location>
    <ligand>
        <name>substrate</name>
    </ligand>
</feature>
<feature type="binding site" evidence="1">
    <location>
        <position position="283"/>
    </location>
    <ligand>
        <name>substrate</name>
    </ligand>
</feature>